<evidence type="ECO:0000250" key="1">
    <source>
        <dbReference type="UniProtKB" id="B6HJ92"/>
    </source>
</evidence>
<evidence type="ECO:0000250" key="2">
    <source>
        <dbReference type="UniProtKB" id="Q02821"/>
    </source>
</evidence>
<evidence type="ECO:0000255" key="3"/>
<evidence type="ECO:0000255" key="4">
    <source>
        <dbReference type="PROSITE-ProRule" id="PRU00561"/>
    </source>
</evidence>
<evidence type="ECO:0000256" key="5">
    <source>
        <dbReference type="SAM" id="MobiDB-lite"/>
    </source>
</evidence>
<evidence type="ECO:0000269" key="6">
    <source>
    </source>
</evidence>
<evidence type="ECO:0000269" key="7">
    <source>
    </source>
</evidence>
<evidence type="ECO:0000269" key="8">
    <source>
    </source>
</evidence>
<evidence type="ECO:0000269" key="9">
    <source>
    </source>
</evidence>
<evidence type="ECO:0000303" key="10">
    <source>
    </source>
</evidence>
<evidence type="ECO:0000305" key="11"/>
<sequence>MAERYIPEHRRTQYKARNQFRPDELRRRREEQQVEIRKQKREENLAKRRGIQTRDGGIGVGGGMAAAESDDEASAIESELNVELPEMVKGVFSDQIEAQIQATTKFRKLLSKERNPPIERVIETGVVSRFVEFLRSPHTLVQFEAAWALTNIASGSAQQTQVVIEAGAVPIFVELLSSPEPDVREQAVWALGNIAGDSPQCRDFVLNAGALRPLLTLINDGRKISMLRNATWTLSNFCRGKTPQPDWNTIAPALPVLAKLIYMLDDEVLIDACWAISYLSDGPNEKIQAVIEAGIPRRLVELLMHASTSVQTPALRSVGNIVTGDDVQTQVIINCGALPALLSLLSSTKDGIRKEACWTISNITAGNSSQIQSVIDAGIIPPLVHLLANGDFKTRKEACWAISNATSGGLQKPDQIRYLVTQGCIKPLCDLLACPDNKIIQVALDGLENILKVGEMDKEAGQGDAHVNRYALFIEEAGGMEKIHDCQNNANEEIYMKAYNIIEKYFSDEDEAAGDIDELAPQQTQTGFTLGATQQQPGGFSFGGANGGDSMDM</sequence>
<keyword id="KW-0539">Nucleus</keyword>
<keyword id="KW-0653">Protein transport</keyword>
<keyword id="KW-1185">Reference proteome</keyword>
<keyword id="KW-0677">Repeat</keyword>
<keyword id="KW-0813">Transport</keyword>
<protein>
    <recommendedName>
        <fullName evidence="11">Importin subunit alpha</fullName>
    </recommendedName>
    <alternativeName>
        <fullName evidence="11">Karyopherin alpha</fullName>
    </alternativeName>
</protein>
<dbReference type="EMBL" id="AF465210">
    <property type="protein sequence ID" value="AAL69976.1"/>
    <property type="molecule type" value="Genomic_DNA"/>
</dbReference>
<dbReference type="EMBL" id="BN001307">
    <property type="protein sequence ID" value="CBF86262.1"/>
    <property type="molecule type" value="Genomic_DNA"/>
</dbReference>
<dbReference type="EMBL" id="AACD01000034">
    <property type="protein sequence ID" value="EAA64186.1"/>
    <property type="molecule type" value="Genomic_DNA"/>
</dbReference>
<dbReference type="RefSeq" id="XP_659746.1">
    <property type="nucleotide sequence ID" value="XM_654654.2"/>
</dbReference>
<dbReference type="SMR" id="G5EB89"/>
<dbReference type="FunCoup" id="G5EB89">
    <property type="interactions" value="1058"/>
</dbReference>
<dbReference type="STRING" id="227321.G5EB89"/>
<dbReference type="EnsemblFungi" id="CBF86262">
    <property type="protein sequence ID" value="CBF86262"/>
    <property type="gene ID" value="ANIA_02142"/>
</dbReference>
<dbReference type="GeneID" id="2875733"/>
<dbReference type="KEGG" id="ani:ANIA_02142"/>
<dbReference type="VEuPathDB" id="FungiDB:AN2142"/>
<dbReference type="eggNOG" id="KOG0166">
    <property type="taxonomic scope" value="Eukaryota"/>
</dbReference>
<dbReference type="HOGENOM" id="CLU_018084_6_0_1"/>
<dbReference type="InParanoid" id="G5EB89"/>
<dbReference type="OMA" id="EMIQMLY"/>
<dbReference type="OrthoDB" id="29145at2759"/>
<dbReference type="Proteomes" id="UP000000560">
    <property type="component" value="Chromosome VII"/>
</dbReference>
<dbReference type="GO" id="GO:0005737">
    <property type="term" value="C:cytoplasm"/>
    <property type="evidence" value="ECO:0000314"/>
    <property type="project" value="AspGD"/>
</dbReference>
<dbReference type="GO" id="GO:0005654">
    <property type="term" value="C:nucleoplasm"/>
    <property type="evidence" value="ECO:0000318"/>
    <property type="project" value="GO_Central"/>
</dbReference>
<dbReference type="GO" id="GO:0005634">
    <property type="term" value="C:nucleus"/>
    <property type="evidence" value="ECO:0000314"/>
    <property type="project" value="AspGD"/>
</dbReference>
<dbReference type="GO" id="GO:0061608">
    <property type="term" value="F:nuclear import signal receptor activity"/>
    <property type="evidence" value="ECO:0000318"/>
    <property type="project" value="GO_Central"/>
</dbReference>
<dbReference type="GO" id="GO:0008139">
    <property type="term" value="F:nuclear localization sequence binding"/>
    <property type="evidence" value="ECO:0000318"/>
    <property type="project" value="GO_Central"/>
</dbReference>
<dbReference type="GO" id="GO:0006607">
    <property type="term" value="P:NLS-bearing protein import into nucleus"/>
    <property type="evidence" value="ECO:0000318"/>
    <property type="project" value="GO_Central"/>
</dbReference>
<dbReference type="GO" id="GO:0006606">
    <property type="term" value="P:protein import into nucleus"/>
    <property type="evidence" value="ECO:0000315"/>
    <property type="project" value="AspGD"/>
</dbReference>
<dbReference type="FunFam" id="1.20.5.690:FF:000003">
    <property type="entry name" value="Importin subunit alpha"/>
    <property type="match status" value="1"/>
</dbReference>
<dbReference type="FunFam" id="1.25.10.10:FF:000021">
    <property type="entry name" value="Importin subunit alpha"/>
    <property type="match status" value="1"/>
</dbReference>
<dbReference type="Gene3D" id="1.20.5.690">
    <property type="entry name" value="Importin-alpha, importin-beta-binding domain"/>
    <property type="match status" value="1"/>
</dbReference>
<dbReference type="Gene3D" id="1.25.10.10">
    <property type="entry name" value="Leucine-rich Repeat Variant"/>
    <property type="match status" value="1"/>
</dbReference>
<dbReference type="InterPro" id="IPR011989">
    <property type="entry name" value="ARM-like"/>
</dbReference>
<dbReference type="InterPro" id="IPR016024">
    <property type="entry name" value="ARM-type_fold"/>
</dbReference>
<dbReference type="InterPro" id="IPR032413">
    <property type="entry name" value="Arm_3"/>
</dbReference>
<dbReference type="InterPro" id="IPR000225">
    <property type="entry name" value="Armadillo"/>
</dbReference>
<dbReference type="InterPro" id="IPR002652">
    <property type="entry name" value="Importin-a_IBB"/>
</dbReference>
<dbReference type="InterPro" id="IPR036975">
    <property type="entry name" value="Importin-a_IBB_sf"/>
</dbReference>
<dbReference type="InterPro" id="IPR024931">
    <property type="entry name" value="Importin_alpha"/>
</dbReference>
<dbReference type="PANTHER" id="PTHR23316">
    <property type="entry name" value="IMPORTIN ALPHA"/>
    <property type="match status" value="1"/>
</dbReference>
<dbReference type="Pfam" id="PF00514">
    <property type="entry name" value="Arm"/>
    <property type="match status" value="8"/>
</dbReference>
<dbReference type="Pfam" id="PF16186">
    <property type="entry name" value="Arm_3"/>
    <property type="match status" value="1"/>
</dbReference>
<dbReference type="Pfam" id="PF01749">
    <property type="entry name" value="IBB"/>
    <property type="match status" value="1"/>
</dbReference>
<dbReference type="PIRSF" id="PIRSF005673">
    <property type="entry name" value="Importin_alpha"/>
    <property type="match status" value="1"/>
</dbReference>
<dbReference type="SMART" id="SM00185">
    <property type="entry name" value="ARM"/>
    <property type="match status" value="8"/>
</dbReference>
<dbReference type="SUPFAM" id="SSF48371">
    <property type="entry name" value="ARM repeat"/>
    <property type="match status" value="1"/>
</dbReference>
<dbReference type="PROSITE" id="PS50176">
    <property type="entry name" value="ARM_REPEAT"/>
    <property type="match status" value="3"/>
</dbReference>
<dbReference type="PROSITE" id="PS51214">
    <property type="entry name" value="IBB"/>
    <property type="match status" value="1"/>
</dbReference>
<organism>
    <name type="scientific">Emericella nidulans (strain FGSC A4 / ATCC 38163 / CBS 112.46 / NRRL 194 / M139)</name>
    <name type="common">Aspergillus nidulans</name>
    <dbReference type="NCBI Taxonomy" id="227321"/>
    <lineage>
        <taxon>Eukaryota</taxon>
        <taxon>Fungi</taxon>
        <taxon>Dikarya</taxon>
        <taxon>Ascomycota</taxon>
        <taxon>Pezizomycotina</taxon>
        <taxon>Eurotiomycetes</taxon>
        <taxon>Eurotiomycetidae</taxon>
        <taxon>Eurotiales</taxon>
        <taxon>Aspergillaceae</taxon>
        <taxon>Aspergillus</taxon>
        <taxon>Aspergillus subgen. Nidulantes</taxon>
    </lineage>
</organism>
<feature type="chain" id="PRO_0000435924" description="Importin subunit alpha">
    <location>
        <begin position="1"/>
        <end position="553"/>
    </location>
</feature>
<feature type="domain" description="IBB" evidence="4">
    <location>
        <begin position="1"/>
        <end position="58"/>
    </location>
</feature>
<feature type="repeat" description="ARM 1" evidence="3">
    <location>
        <begin position="115"/>
        <end position="154"/>
    </location>
</feature>
<feature type="repeat" description="ARM 2" evidence="3">
    <location>
        <begin position="157"/>
        <end position="196"/>
    </location>
</feature>
<feature type="repeat" description="ARM 3" evidence="3">
    <location>
        <begin position="199"/>
        <end position="239"/>
    </location>
</feature>
<feature type="repeat" description="ARM 4" evidence="3">
    <location>
        <begin position="242"/>
        <end position="281"/>
    </location>
</feature>
<feature type="repeat" description="ARM 5" evidence="3">
    <location>
        <begin position="284"/>
        <end position="323"/>
    </location>
</feature>
<feature type="repeat" description="ARM 6" evidence="3">
    <location>
        <begin position="326"/>
        <end position="365"/>
    </location>
</feature>
<feature type="repeat" description="ARM 7" evidence="3">
    <location>
        <begin position="368"/>
        <end position="407"/>
    </location>
</feature>
<feature type="repeat" description="ARM 8" evidence="3">
    <location>
        <begin position="413"/>
        <end position="452"/>
    </location>
</feature>
<feature type="region of interest" description="Disordered" evidence="5">
    <location>
        <begin position="1"/>
        <end position="65"/>
    </location>
</feature>
<feature type="region of interest" description="Disordered" evidence="5">
    <location>
        <begin position="530"/>
        <end position="553"/>
    </location>
</feature>
<feature type="compositionally biased region" description="Basic and acidic residues" evidence="5">
    <location>
        <begin position="1"/>
        <end position="11"/>
    </location>
</feature>
<feature type="compositionally biased region" description="Basic and acidic residues" evidence="5">
    <location>
        <begin position="20"/>
        <end position="46"/>
    </location>
</feature>
<feature type="mutagenesis site" description="Leads to thermosensitivity and affects nuclear import at the restrictive temperature." evidence="9">
    <original>S</original>
    <variation>F</variation>
    <location>
        <position position="111"/>
    </location>
</feature>
<proteinExistence type="evidence at protein level"/>
<comment type="function">
    <text evidence="6 7 9">Import of proteins with classical NLS composed of one or two clusters of basic residues is initiated by binding to the importin alpha/beta heterodimer, where importin alpha acts as an adapter subunit to bridge NLS cargos to importin beta, which transports the whole complex through the nuclear envelope (PubMed:12684370). Involved in the nuclear accumulation of the light-dependent developmental regulator veA (PubMed:17163983, PubMed:19318129). Participates at different regulatory stages of asexual and sexual development, being required for the completion of both reproductive cycles with the formation of conidiospores and ascospores, respectively (PubMed:19318129). Mediates secondary metabolite gene expression with positive regulation of penicillin production and negative regulation of mycotoxin biosynthesis (PubMed:19318129).</text>
</comment>
<comment type="subunit">
    <text evidence="2 8">Forms a complex with an importin beta subunit (By similarity). Interacts with hsp70, hsp90, napB, nkuA, nudK, AN1413 and nimE (PubMed:17890114).</text>
</comment>
<comment type="subcellular location">
    <subcellularLocation>
        <location evidence="1">Nucleus</location>
    </subcellularLocation>
</comment>
<comment type="disruption phenotype">
    <text evidence="9">Leads to lethality (PubMed:19318129).</text>
</comment>
<comment type="similarity">
    <text evidence="11">Belongs to the importin alpha family.</text>
</comment>
<reference key="1">
    <citation type="journal article" date="2008" name="Fungal Genet. Biol.">
        <title>NapA and NapB are the Aspergillus nidulans Nap/SET family members and NapB is a nuclear protein specifically interacting with importin alpha.</title>
        <authorList>
            <person name="Araujo-Bazan L."/>
            <person name="Fernandez-Martinez J."/>
            <person name="Rios V.M."/>
            <person name="Etxebeste O."/>
            <person name="Albar J.P."/>
            <person name="Penalva M.A."/>
            <person name="Espeso E.A."/>
        </authorList>
    </citation>
    <scope>NUCLEOTIDE SEQUENCE [GENOMIC DNA]</scope>
    <scope>INTERACTION WITH HSP70; HSP90; NAPB; NKUA; NUDK; AN1413 AND NIME</scope>
</reference>
<reference key="2">
    <citation type="journal article" date="2005" name="Nature">
        <title>Sequencing of Aspergillus nidulans and comparative analysis with A. fumigatus and A. oryzae.</title>
        <authorList>
            <person name="Galagan J.E."/>
            <person name="Calvo S.E."/>
            <person name="Cuomo C."/>
            <person name="Ma L.-J."/>
            <person name="Wortman J.R."/>
            <person name="Batzoglou S."/>
            <person name="Lee S.-I."/>
            <person name="Bastuerkmen M."/>
            <person name="Spevak C.C."/>
            <person name="Clutterbuck J."/>
            <person name="Kapitonov V."/>
            <person name="Jurka J."/>
            <person name="Scazzocchio C."/>
            <person name="Farman M.L."/>
            <person name="Butler J."/>
            <person name="Purcell S."/>
            <person name="Harris S."/>
            <person name="Braus G.H."/>
            <person name="Draht O."/>
            <person name="Busch S."/>
            <person name="D'Enfert C."/>
            <person name="Bouchier C."/>
            <person name="Goldman G.H."/>
            <person name="Bell-Pedersen D."/>
            <person name="Griffiths-Jones S."/>
            <person name="Doonan J.H."/>
            <person name="Yu J."/>
            <person name="Vienken K."/>
            <person name="Pain A."/>
            <person name="Freitag M."/>
            <person name="Selker E.U."/>
            <person name="Archer D.B."/>
            <person name="Penalva M.A."/>
            <person name="Oakley B.R."/>
            <person name="Momany M."/>
            <person name="Tanaka T."/>
            <person name="Kumagai T."/>
            <person name="Asai K."/>
            <person name="Machida M."/>
            <person name="Nierman W.C."/>
            <person name="Denning D.W."/>
            <person name="Caddick M.X."/>
            <person name="Hynes M."/>
            <person name="Paoletti M."/>
            <person name="Fischer R."/>
            <person name="Miller B.L."/>
            <person name="Dyer P.S."/>
            <person name="Sachs M.S."/>
            <person name="Osmani S.A."/>
            <person name="Birren B.W."/>
        </authorList>
    </citation>
    <scope>NUCLEOTIDE SEQUENCE [LARGE SCALE GENOMIC DNA]</scope>
    <source>
        <strain>FGSC A4 / ATCC 38163 / CBS 112.46 / NRRL 194 / M139</strain>
    </source>
</reference>
<reference key="3">
    <citation type="journal article" date="2009" name="Fungal Genet. Biol.">
        <title>The 2008 update of the Aspergillus nidulans genome annotation: a community effort.</title>
        <authorList>
            <person name="Wortman J.R."/>
            <person name="Gilsenan J.M."/>
            <person name="Joardar V."/>
            <person name="Deegan J."/>
            <person name="Clutterbuck J."/>
            <person name="Andersen M.R."/>
            <person name="Archer D."/>
            <person name="Bencina M."/>
            <person name="Braus G."/>
            <person name="Coutinho P."/>
            <person name="von Dohren H."/>
            <person name="Doonan J."/>
            <person name="Driessen A.J."/>
            <person name="Durek P."/>
            <person name="Espeso E."/>
            <person name="Fekete E."/>
            <person name="Flipphi M."/>
            <person name="Estrada C.G."/>
            <person name="Geysens S."/>
            <person name="Goldman G."/>
            <person name="de Groot P.W."/>
            <person name="Hansen K."/>
            <person name="Harris S.D."/>
            <person name="Heinekamp T."/>
            <person name="Helmstaedt K."/>
            <person name="Henrissat B."/>
            <person name="Hofmann G."/>
            <person name="Homan T."/>
            <person name="Horio T."/>
            <person name="Horiuchi H."/>
            <person name="James S."/>
            <person name="Jones M."/>
            <person name="Karaffa L."/>
            <person name="Karanyi Z."/>
            <person name="Kato M."/>
            <person name="Keller N."/>
            <person name="Kelly D.E."/>
            <person name="Kiel J.A."/>
            <person name="Kim J.M."/>
            <person name="van der Klei I.J."/>
            <person name="Klis F.M."/>
            <person name="Kovalchuk A."/>
            <person name="Krasevec N."/>
            <person name="Kubicek C.P."/>
            <person name="Liu B."/>
            <person name="Maccabe A."/>
            <person name="Meyer V."/>
            <person name="Mirabito P."/>
            <person name="Miskei M."/>
            <person name="Mos M."/>
            <person name="Mullins J."/>
            <person name="Nelson D.R."/>
            <person name="Nielsen J."/>
            <person name="Oakley B.R."/>
            <person name="Osmani S.A."/>
            <person name="Pakula T."/>
            <person name="Paszewski A."/>
            <person name="Paulsen I."/>
            <person name="Pilsyk S."/>
            <person name="Pocsi I."/>
            <person name="Punt P.J."/>
            <person name="Ram A.F."/>
            <person name="Ren Q."/>
            <person name="Robellet X."/>
            <person name="Robson G."/>
            <person name="Seiboth B."/>
            <person name="van Solingen P."/>
            <person name="Specht T."/>
            <person name="Sun J."/>
            <person name="Taheri-Talesh N."/>
            <person name="Takeshita N."/>
            <person name="Ussery D."/>
            <person name="vanKuyk P.A."/>
            <person name="Visser H."/>
            <person name="van de Vondervoort P.J."/>
            <person name="de Vries R.P."/>
            <person name="Walton J."/>
            <person name="Xiang X."/>
            <person name="Xiong Y."/>
            <person name="Zeng A.P."/>
            <person name="Brandt B.W."/>
            <person name="Cornell M.J."/>
            <person name="van den Hondel C.A."/>
            <person name="Visser J."/>
            <person name="Oliver S.G."/>
            <person name="Turner G."/>
        </authorList>
    </citation>
    <scope>GENOME REANNOTATION</scope>
    <source>
        <strain>FGSC A4 / ATCC 38163 / CBS 112.46 / NRRL 194 / M139</strain>
    </source>
</reference>
<reference key="4">
    <citation type="journal article" date="2003" name="Eukaryot. Cell">
        <title>Nuclear import of zinc binuclear cluster proteins proceeds through multiple, overlapping transport pathways.</title>
        <authorList>
            <person name="Nikolaev I."/>
            <person name="Cochet M.-F."/>
            <person name="Felenbok B."/>
        </authorList>
    </citation>
    <scope>FUNCTION</scope>
</reference>
<reference key="5">
    <citation type="journal article" date="2007" name="Mol. Microbiol.">
        <title>Aspergillus nidulans VeA subcellular localization is dependent on the importin alpha carrier and on light.</title>
        <authorList>
            <person name="Stinnett S.M."/>
            <person name="Espeso E.A."/>
            <person name="Cobeno L."/>
            <person name="Araujo-Bazan L."/>
            <person name="Calvo A.M."/>
        </authorList>
    </citation>
    <scope>FUNCTION</scope>
</reference>
<reference key="6">
    <citation type="journal article" date="2009" name="Fungal Genet. Biol.">
        <title>Importin alpha is an essential nuclear import carrier adaptor required for proper sexual and asexual development and secondary metabolism in Aspergillus nidulans.</title>
        <authorList>
            <person name="Araujo-Bazan L."/>
            <person name="Dhingra S."/>
            <person name="Chu J."/>
            <person name="Fernandez-Martinez J."/>
            <person name="Calvo A.M."/>
            <person name="Espeso E.A."/>
        </authorList>
    </citation>
    <scope>FUNCTION</scope>
    <scope>DISRUPTION PHENOTYPE</scope>
    <scope>MUTAGENESIS OF SER-111</scope>
</reference>
<accession>G5EB89</accession>
<accession>C8VM76</accession>
<accession>Q5BBD8</accession>
<accession>Q8X175</accession>
<name>KAPA_EMENI</name>
<gene>
    <name evidence="10" type="primary">kapA</name>
    <name type="synonym">srp1</name>
    <name type="ORF">AN2142</name>
</gene>